<reference evidence="3" key="1">
    <citation type="journal article" date="2004" name="J. Pept. Res.">
        <title>A napin-like polypeptide with translation-inhibitory, trypsin-inhibitory, antiproliferative and antibacterial activities from kale seeds.</title>
        <authorList>
            <person name="Ngai P.H."/>
            <person name="Ng T.B."/>
        </authorList>
    </citation>
    <scope>PROTEIN SEQUENCE</scope>
    <scope>FUNCTION</scope>
    <source>
        <strain evidence="1">cv. Swatow</strain>
        <tissue evidence="1">Seed</tissue>
    </source>
</reference>
<feature type="chain" id="PRO_0000225612" description="Napin-like polypeptide small chain" evidence="1">
    <location>
        <begin position="1"/>
        <end position="9" status="greater than"/>
    </location>
</feature>
<feature type="chain" id="PRO_0000225613" description="Napin-like polypeptide large chain" evidence="1">
    <location>
        <begin position="10"/>
        <end position="17" status="greater than"/>
    </location>
</feature>
<feature type="non-consecutive residues" evidence="2">
    <location>
        <begin position="9"/>
        <end position="10"/>
    </location>
</feature>
<feature type="non-terminal residue" evidence="2">
    <location>
        <position position="17"/>
    </location>
</feature>
<keyword id="KW-0044">Antibiotic</keyword>
<keyword id="KW-0929">Antimicrobial</keyword>
<keyword id="KW-0165">Cleavage on pair of basic residues</keyword>
<keyword id="KW-0903">Direct protein sequencing</keyword>
<keyword id="KW-1015">Disulfide bond</keyword>
<keyword id="KW-0652">Protein synthesis inhibitor</keyword>
<comment type="function">
    <text evidence="1">Inhibits cell-free protein synthesis. Inhibits trypsin and chymotrypsin. Does not inhibit ribonuclease of protease activity. Has antibacterial activity against Gram-negative bacterium P.fluorescens, and the Gram-positive bacteria B.subtilis, B.cereus, B.megaterium and M.phlei. No antibacterial activity against the Gram-positive bacterium S.aureus or the Gram-negative bacteria E.coli, E.aerogenes, P.aeruginosa and P.vulgaris. Inhibits the proliferation of leukemia cells in vitro.</text>
</comment>
<comment type="subunit">
    <text evidence="3">The mature protein consists of a small and a large chain linked by disulfide bonds.</text>
</comment>
<comment type="similarity">
    <text evidence="3">Belongs to the 2S seed storage albumins family.</text>
</comment>
<dbReference type="GO" id="GO:0004867">
    <property type="term" value="F:serine-type endopeptidase inhibitor activity"/>
    <property type="evidence" value="ECO:0000314"/>
    <property type="project" value="UniProtKB"/>
</dbReference>
<dbReference type="GO" id="GO:0050829">
    <property type="term" value="P:defense response to Gram-negative bacterium"/>
    <property type="evidence" value="ECO:0000314"/>
    <property type="project" value="UniProtKB"/>
</dbReference>
<dbReference type="GO" id="GO:0050830">
    <property type="term" value="P:defense response to Gram-positive bacterium"/>
    <property type="evidence" value="ECO:0000314"/>
    <property type="project" value="UniProtKB"/>
</dbReference>
<dbReference type="GO" id="GO:0008285">
    <property type="term" value="P:negative regulation of cell population proliferation"/>
    <property type="evidence" value="ECO:0000314"/>
    <property type="project" value="UniProtKB"/>
</dbReference>
<dbReference type="GO" id="GO:0017148">
    <property type="term" value="P:negative regulation of translation"/>
    <property type="evidence" value="ECO:0007669"/>
    <property type="project" value="UniProtKB-KW"/>
</dbReference>
<sequence length="17" mass="2052">PAQPFRIKKRQGPFERP</sequence>
<protein>
    <recommendedName>
        <fullName>Napin-like polypeptide</fullName>
    </recommendedName>
    <component>
        <recommendedName>
            <fullName>Napin-like polypeptide small chain</fullName>
        </recommendedName>
    </component>
    <component>
        <recommendedName>
            <fullName>Napin-like polypeptide large chain</fullName>
        </recommendedName>
    </component>
</protein>
<name>2SS1_BRAOA</name>
<evidence type="ECO:0000269" key="1">
    <source>
    </source>
</evidence>
<evidence type="ECO:0000303" key="2">
    <source>
    </source>
</evidence>
<evidence type="ECO:0000305" key="3"/>
<proteinExistence type="evidence at protein level"/>
<accession>P84782</accession>
<organism>
    <name type="scientific">Brassica oleracea var. alboglabra</name>
    <name type="common">Chinese kale</name>
    <name type="synonym">Brassica alboglabra</name>
    <dbReference type="NCBI Taxonomy" id="3714"/>
    <lineage>
        <taxon>Eukaryota</taxon>
        <taxon>Viridiplantae</taxon>
        <taxon>Streptophyta</taxon>
        <taxon>Embryophyta</taxon>
        <taxon>Tracheophyta</taxon>
        <taxon>Spermatophyta</taxon>
        <taxon>Magnoliopsida</taxon>
        <taxon>eudicotyledons</taxon>
        <taxon>Gunneridae</taxon>
        <taxon>Pentapetalae</taxon>
        <taxon>rosids</taxon>
        <taxon>malvids</taxon>
        <taxon>Brassicales</taxon>
        <taxon>Brassicaceae</taxon>
        <taxon>Brassiceae</taxon>
        <taxon>Brassica</taxon>
    </lineage>
</organism>